<name>NAPA_HISS2</name>
<comment type="function">
    <text evidence="1">Catalytic subunit of the periplasmic nitrate reductase complex NapAB. Receives electrons from NapB and catalyzes the reduction of nitrate to nitrite.</text>
</comment>
<comment type="catalytic activity">
    <reaction evidence="1">
        <text>2 Fe(II)-[cytochrome] + nitrate + 2 H(+) = 2 Fe(III)-[cytochrome] + nitrite + H2O</text>
        <dbReference type="Rhea" id="RHEA:12909"/>
        <dbReference type="Rhea" id="RHEA-COMP:11777"/>
        <dbReference type="Rhea" id="RHEA-COMP:11778"/>
        <dbReference type="ChEBI" id="CHEBI:15377"/>
        <dbReference type="ChEBI" id="CHEBI:15378"/>
        <dbReference type="ChEBI" id="CHEBI:16301"/>
        <dbReference type="ChEBI" id="CHEBI:17632"/>
        <dbReference type="ChEBI" id="CHEBI:29033"/>
        <dbReference type="ChEBI" id="CHEBI:29034"/>
        <dbReference type="EC" id="1.9.6.1"/>
    </reaction>
</comment>
<comment type="cofactor">
    <cofactor evidence="1">
        <name>[4Fe-4S] cluster</name>
        <dbReference type="ChEBI" id="CHEBI:49883"/>
    </cofactor>
    <text evidence="1">Binds 1 [4Fe-4S] cluster.</text>
</comment>
<comment type="cofactor">
    <cofactor evidence="1">
        <name>Mo-bis(molybdopterin guanine dinucleotide)</name>
        <dbReference type="ChEBI" id="CHEBI:60539"/>
    </cofactor>
    <text evidence="1">Binds 1 molybdenum-bis(molybdopterin guanine dinucleotide) (Mo-bis-MGD) cofactor per subunit.</text>
</comment>
<comment type="subunit">
    <text evidence="1">Component of the periplasmic nitrate reductase NapAB complex composed of NapA and NapB.</text>
</comment>
<comment type="subcellular location">
    <subcellularLocation>
        <location evidence="1">Periplasm</location>
    </subcellularLocation>
</comment>
<comment type="PTM">
    <text evidence="1">Predicted to be exported by the Tat system. The position of the signal peptide cleavage has not been experimentally proven.</text>
</comment>
<comment type="similarity">
    <text evidence="1">Belongs to the prokaryotic molybdopterin-containing oxidoreductase family. NasA/NapA/NarB subfamily.</text>
</comment>
<gene>
    <name evidence="1" type="primary">napA</name>
    <name type="ordered locus">HSM_0493</name>
</gene>
<organism>
    <name type="scientific">Histophilus somni (strain 2336)</name>
    <name type="common">Haemophilus somnus</name>
    <dbReference type="NCBI Taxonomy" id="228400"/>
    <lineage>
        <taxon>Bacteria</taxon>
        <taxon>Pseudomonadati</taxon>
        <taxon>Pseudomonadota</taxon>
        <taxon>Gammaproteobacteria</taxon>
        <taxon>Pasteurellales</taxon>
        <taxon>Pasteurellaceae</taxon>
        <taxon>Histophilus</taxon>
    </lineage>
</organism>
<reference key="1">
    <citation type="submission" date="2008-02" db="EMBL/GenBank/DDBJ databases">
        <title>Complete sequence of Haemophilus somnus 2336.</title>
        <authorList>
            <consortium name="US DOE Joint Genome Institute"/>
            <person name="Siddaramappa S."/>
            <person name="Duncan A.J."/>
            <person name="Challacombe J.F."/>
            <person name="Rainey D."/>
            <person name="Gillaspy A.F."/>
            <person name="Carson M."/>
            <person name="Gipson J."/>
            <person name="Gipson M."/>
            <person name="Bruce D."/>
            <person name="Detter J.C."/>
            <person name="Han C.S."/>
            <person name="Land M."/>
            <person name="Tapia R."/>
            <person name="Thompson L.S."/>
            <person name="Orvis J."/>
            <person name="Zaitshik J."/>
            <person name="Barnes G."/>
            <person name="Brettin T.S."/>
            <person name="Dyer D.W."/>
            <person name="Inzana T.J."/>
        </authorList>
    </citation>
    <scope>NUCLEOTIDE SEQUENCE [LARGE SCALE GENOMIC DNA]</scope>
    <source>
        <strain>2336</strain>
    </source>
</reference>
<protein>
    <recommendedName>
        <fullName evidence="1">Periplasmic nitrate reductase</fullName>
        <ecNumber evidence="1">1.9.6.1</ecNumber>
    </recommendedName>
</protein>
<sequence>MNLSRRDFMKANAALAAASVAGLIIPVKNVNAADTSITWDKAVCRFCGTGCAVLVGTKDGRVVASQGDPDAEVNRGLNCIKGYFLPKIMYGKDRLTHPMLRMKNGQYDKEGEFTPVTWDFAFKTMAEKFKSALKAKGPNGVGMFTSGQSTIFEGVAKSKLFKAGLLSNNIDPNARHCMASAAVAFVRTFGIDEPMGCYDDIEHADAFVLWGSNMAEMHPILWSRISDRRLANPDTVSVNVLSTFEHRSFELADLGILLKPQSDLAILNYIANYLIENNAINREFIEKHTKFKRGETDIGYGLRPQDPREQTAKNVKTAGKMYDSSFEEFKKLVAPYTLEKAHEISGVPKEQLEKLAKLYADPNKKVVSYWTMGINQHTRGVWANHLIYNIHLLTGKISLPGCGPFSLTGQPSACGTAREVGTFIHRLPADLVVIKPEHRKIAEKIWKLPEGLISDKLGFHAVAQSRALKDGKMQVLWQMCNNNMQAGPNINEETYPGWRNPDNFIVVSDPYPTVSALSADLILPTAMWVEKEGAYGNAERRTQFWRQQVKAPGEAKSDLWQLVEFSKYFTTDEVWPAEILAKNPAYQGKTLYEVLYLNGQVNQYSNDELKGRLNDEAYHFGFYIQKGLFEEYASFGRGHGHDLADFDTYHKARGLRWPVVDGKETLWRYREGYDPYVKAGEGVSFYGQADKRAVILAVPYEPPAEVPDRKYDLWLTTGRILEHWHTGSMTRRVPELHRSFPNNLVWMNPNDAKKRGLKHGDKIKVISRRGEITSYIDTRGRNKCPEGLIYTTFFDAGQLANKLILDATDPISKETDFKKCAVKVVKA</sequence>
<keyword id="KW-0004">4Fe-4S</keyword>
<keyword id="KW-0249">Electron transport</keyword>
<keyword id="KW-0408">Iron</keyword>
<keyword id="KW-0411">Iron-sulfur</keyword>
<keyword id="KW-0479">Metal-binding</keyword>
<keyword id="KW-0500">Molybdenum</keyword>
<keyword id="KW-0534">Nitrate assimilation</keyword>
<keyword id="KW-0560">Oxidoreductase</keyword>
<keyword id="KW-0574">Periplasm</keyword>
<keyword id="KW-0732">Signal</keyword>
<keyword id="KW-0813">Transport</keyword>
<dbReference type="EC" id="1.9.6.1" evidence="1"/>
<dbReference type="EMBL" id="CP000947">
    <property type="protein sequence ID" value="ACA32139.1"/>
    <property type="molecule type" value="Genomic_DNA"/>
</dbReference>
<dbReference type="RefSeq" id="WP_012341329.1">
    <property type="nucleotide sequence ID" value="NC_010519.1"/>
</dbReference>
<dbReference type="SMR" id="B0URQ3"/>
<dbReference type="STRING" id="228400.HSM_0493"/>
<dbReference type="GeneID" id="31486772"/>
<dbReference type="KEGG" id="hsm:HSM_0493"/>
<dbReference type="HOGENOM" id="CLU_000422_13_4_6"/>
<dbReference type="GO" id="GO:0016020">
    <property type="term" value="C:membrane"/>
    <property type="evidence" value="ECO:0007669"/>
    <property type="project" value="TreeGrafter"/>
</dbReference>
<dbReference type="GO" id="GO:0009325">
    <property type="term" value="C:nitrate reductase complex"/>
    <property type="evidence" value="ECO:0007669"/>
    <property type="project" value="TreeGrafter"/>
</dbReference>
<dbReference type="GO" id="GO:0042597">
    <property type="term" value="C:periplasmic space"/>
    <property type="evidence" value="ECO:0007669"/>
    <property type="project" value="UniProtKB-SubCell"/>
</dbReference>
<dbReference type="GO" id="GO:0051539">
    <property type="term" value="F:4 iron, 4 sulfur cluster binding"/>
    <property type="evidence" value="ECO:0007669"/>
    <property type="project" value="UniProtKB-KW"/>
</dbReference>
<dbReference type="GO" id="GO:0009055">
    <property type="term" value="F:electron transfer activity"/>
    <property type="evidence" value="ECO:0007669"/>
    <property type="project" value="UniProtKB-UniRule"/>
</dbReference>
<dbReference type="GO" id="GO:0005506">
    <property type="term" value="F:iron ion binding"/>
    <property type="evidence" value="ECO:0007669"/>
    <property type="project" value="UniProtKB-UniRule"/>
</dbReference>
<dbReference type="GO" id="GO:0030151">
    <property type="term" value="F:molybdenum ion binding"/>
    <property type="evidence" value="ECO:0007669"/>
    <property type="project" value="InterPro"/>
</dbReference>
<dbReference type="GO" id="GO:0043546">
    <property type="term" value="F:molybdopterin cofactor binding"/>
    <property type="evidence" value="ECO:0007669"/>
    <property type="project" value="InterPro"/>
</dbReference>
<dbReference type="GO" id="GO:0050140">
    <property type="term" value="F:nitrate reductase (cytochrome) activity"/>
    <property type="evidence" value="ECO:0007669"/>
    <property type="project" value="UniProtKB-EC"/>
</dbReference>
<dbReference type="GO" id="GO:0045333">
    <property type="term" value="P:cellular respiration"/>
    <property type="evidence" value="ECO:0007669"/>
    <property type="project" value="UniProtKB-ARBA"/>
</dbReference>
<dbReference type="GO" id="GO:0006777">
    <property type="term" value="P:Mo-molybdopterin cofactor biosynthetic process"/>
    <property type="evidence" value="ECO:0007669"/>
    <property type="project" value="UniProtKB-UniRule"/>
</dbReference>
<dbReference type="GO" id="GO:0042128">
    <property type="term" value="P:nitrate assimilation"/>
    <property type="evidence" value="ECO:0007669"/>
    <property type="project" value="UniProtKB-UniRule"/>
</dbReference>
<dbReference type="CDD" id="cd02791">
    <property type="entry name" value="MopB_CT_Nitrate-R-NapA-like"/>
    <property type="match status" value="1"/>
</dbReference>
<dbReference type="CDD" id="cd02754">
    <property type="entry name" value="MopB_Nitrate-R-NapA-like"/>
    <property type="match status" value="1"/>
</dbReference>
<dbReference type="FunFam" id="2.40.40.20:FF:000005">
    <property type="entry name" value="Periplasmic nitrate reductase"/>
    <property type="match status" value="1"/>
</dbReference>
<dbReference type="Gene3D" id="2.40.40.20">
    <property type="match status" value="1"/>
</dbReference>
<dbReference type="Gene3D" id="3.30.200.210">
    <property type="match status" value="1"/>
</dbReference>
<dbReference type="Gene3D" id="3.40.50.740">
    <property type="match status" value="1"/>
</dbReference>
<dbReference type="Gene3D" id="3.40.228.10">
    <property type="entry name" value="Dimethylsulfoxide Reductase, domain 2"/>
    <property type="match status" value="1"/>
</dbReference>
<dbReference type="HAMAP" id="MF_01630">
    <property type="entry name" value="Nitrate_reduct_NapA"/>
    <property type="match status" value="1"/>
</dbReference>
<dbReference type="InterPro" id="IPR009010">
    <property type="entry name" value="Asp_de-COase-like_dom_sf"/>
</dbReference>
<dbReference type="InterPro" id="IPR041957">
    <property type="entry name" value="CT_Nitrate-R-NapA-like"/>
</dbReference>
<dbReference type="InterPro" id="IPR006657">
    <property type="entry name" value="MoPterin_dinucl-bd_dom"/>
</dbReference>
<dbReference type="InterPro" id="IPR006656">
    <property type="entry name" value="Mopterin_OxRdtase"/>
</dbReference>
<dbReference type="InterPro" id="IPR006963">
    <property type="entry name" value="Mopterin_OxRdtase_4Fe-4S_dom"/>
</dbReference>
<dbReference type="InterPro" id="IPR027467">
    <property type="entry name" value="MopterinOxRdtase_cofactor_BS"/>
</dbReference>
<dbReference type="InterPro" id="IPR010051">
    <property type="entry name" value="Periplasm_NO3_reductase_lsu"/>
</dbReference>
<dbReference type="InterPro" id="IPR050123">
    <property type="entry name" value="Prok_molybdopt-oxidoreductase"/>
</dbReference>
<dbReference type="InterPro" id="IPR006311">
    <property type="entry name" value="TAT_signal"/>
</dbReference>
<dbReference type="InterPro" id="IPR019546">
    <property type="entry name" value="TAT_signal_bac_arc"/>
</dbReference>
<dbReference type="NCBIfam" id="TIGR01706">
    <property type="entry name" value="NAPA"/>
    <property type="match status" value="1"/>
</dbReference>
<dbReference type="NCBIfam" id="NF010055">
    <property type="entry name" value="PRK13532.1"/>
    <property type="match status" value="1"/>
</dbReference>
<dbReference type="NCBIfam" id="TIGR01409">
    <property type="entry name" value="TAT_signal_seq"/>
    <property type="match status" value="1"/>
</dbReference>
<dbReference type="PANTHER" id="PTHR43105:SF11">
    <property type="entry name" value="PERIPLASMIC NITRATE REDUCTASE"/>
    <property type="match status" value="1"/>
</dbReference>
<dbReference type="PANTHER" id="PTHR43105">
    <property type="entry name" value="RESPIRATORY NITRATE REDUCTASE"/>
    <property type="match status" value="1"/>
</dbReference>
<dbReference type="Pfam" id="PF04879">
    <property type="entry name" value="Molybdop_Fe4S4"/>
    <property type="match status" value="1"/>
</dbReference>
<dbReference type="Pfam" id="PF00384">
    <property type="entry name" value="Molybdopterin"/>
    <property type="match status" value="1"/>
</dbReference>
<dbReference type="Pfam" id="PF01568">
    <property type="entry name" value="Molydop_binding"/>
    <property type="match status" value="1"/>
</dbReference>
<dbReference type="PIRSF" id="PIRSF000144">
    <property type="entry name" value="CbbBc"/>
    <property type="match status" value="1"/>
</dbReference>
<dbReference type="SMART" id="SM00926">
    <property type="entry name" value="Molybdop_Fe4S4"/>
    <property type="match status" value="1"/>
</dbReference>
<dbReference type="SUPFAM" id="SSF50692">
    <property type="entry name" value="ADC-like"/>
    <property type="match status" value="1"/>
</dbReference>
<dbReference type="SUPFAM" id="SSF53706">
    <property type="entry name" value="Formate dehydrogenase/DMSO reductase, domains 1-3"/>
    <property type="match status" value="1"/>
</dbReference>
<dbReference type="PROSITE" id="PS51669">
    <property type="entry name" value="4FE4S_MOW_BIS_MGD"/>
    <property type="match status" value="1"/>
</dbReference>
<dbReference type="PROSITE" id="PS00551">
    <property type="entry name" value="MOLYBDOPTERIN_PROK_1"/>
    <property type="match status" value="1"/>
</dbReference>
<dbReference type="PROSITE" id="PS51318">
    <property type="entry name" value="TAT"/>
    <property type="match status" value="1"/>
</dbReference>
<evidence type="ECO:0000255" key="1">
    <source>
        <dbReference type="HAMAP-Rule" id="MF_01630"/>
    </source>
</evidence>
<accession>B0URQ3</accession>
<feature type="signal peptide" description="Tat-type signal" evidence="1">
    <location>
        <begin position="1"/>
        <end position="32"/>
    </location>
</feature>
<feature type="chain" id="PRO_5000310961" description="Periplasmic nitrate reductase" evidence="1">
    <location>
        <begin position="33"/>
        <end position="827"/>
    </location>
</feature>
<feature type="domain" description="4Fe-4S Mo/W bis-MGD-type" evidence="1">
    <location>
        <begin position="37"/>
        <end position="93"/>
    </location>
</feature>
<feature type="binding site" evidence="1">
    <location>
        <position position="44"/>
    </location>
    <ligand>
        <name>[4Fe-4S] cluster</name>
        <dbReference type="ChEBI" id="CHEBI:49883"/>
    </ligand>
</feature>
<feature type="binding site" evidence="1">
    <location>
        <position position="47"/>
    </location>
    <ligand>
        <name>[4Fe-4S] cluster</name>
        <dbReference type="ChEBI" id="CHEBI:49883"/>
    </ligand>
</feature>
<feature type="binding site" evidence="1">
    <location>
        <position position="51"/>
    </location>
    <ligand>
        <name>[4Fe-4S] cluster</name>
        <dbReference type="ChEBI" id="CHEBI:49883"/>
    </ligand>
</feature>
<feature type="binding site" evidence="1">
    <location>
        <position position="79"/>
    </location>
    <ligand>
        <name>[4Fe-4S] cluster</name>
        <dbReference type="ChEBI" id="CHEBI:49883"/>
    </ligand>
</feature>
<feature type="binding site" evidence="1">
    <location>
        <position position="81"/>
    </location>
    <ligand>
        <name>Mo-bis(molybdopterin guanine dinucleotide)</name>
        <dbReference type="ChEBI" id="CHEBI:60539"/>
    </ligand>
</feature>
<feature type="binding site" evidence="1">
    <location>
        <position position="148"/>
    </location>
    <ligand>
        <name>Mo-bis(molybdopterin guanine dinucleotide)</name>
        <dbReference type="ChEBI" id="CHEBI:60539"/>
    </ligand>
</feature>
<feature type="binding site" evidence="1">
    <location>
        <position position="173"/>
    </location>
    <ligand>
        <name>Mo-bis(molybdopterin guanine dinucleotide)</name>
        <dbReference type="ChEBI" id="CHEBI:60539"/>
    </ligand>
</feature>
<feature type="binding site" evidence="1">
    <location>
        <position position="177"/>
    </location>
    <ligand>
        <name>Mo-bis(molybdopterin guanine dinucleotide)</name>
        <dbReference type="ChEBI" id="CHEBI:60539"/>
    </ligand>
</feature>
<feature type="binding site" evidence="1">
    <location>
        <begin position="210"/>
        <end position="217"/>
    </location>
    <ligand>
        <name>Mo-bis(molybdopterin guanine dinucleotide)</name>
        <dbReference type="ChEBI" id="CHEBI:60539"/>
    </ligand>
</feature>
<feature type="binding site" evidence="1">
    <location>
        <begin position="242"/>
        <end position="246"/>
    </location>
    <ligand>
        <name>Mo-bis(molybdopterin guanine dinucleotide)</name>
        <dbReference type="ChEBI" id="CHEBI:60539"/>
    </ligand>
</feature>
<feature type="binding site" evidence="1">
    <location>
        <begin position="261"/>
        <end position="263"/>
    </location>
    <ligand>
        <name>Mo-bis(molybdopterin guanine dinucleotide)</name>
        <dbReference type="ChEBI" id="CHEBI:60539"/>
    </ligand>
</feature>
<feature type="binding site" evidence="1">
    <location>
        <position position="372"/>
    </location>
    <ligand>
        <name>Mo-bis(molybdopterin guanine dinucleotide)</name>
        <dbReference type="ChEBI" id="CHEBI:60539"/>
    </ligand>
</feature>
<feature type="binding site" evidence="1">
    <location>
        <position position="376"/>
    </location>
    <ligand>
        <name>Mo-bis(molybdopterin guanine dinucleotide)</name>
        <dbReference type="ChEBI" id="CHEBI:60539"/>
    </ligand>
</feature>
<feature type="binding site" evidence="1">
    <location>
        <position position="482"/>
    </location>
    <ligand>
        <name>Mo-bis(molybdopterin guanine dinucleotide)</name>
        <dbReference type="ChEBI" id="CHEBI:60539"/>
    </ligand>
</feature>
<feature type="binding site" evidence="1">
    <location>
        <begin position="508"/>
        <end position="509"/>
    </location>
    <ligand>
        <name>Mo-bis(molybdopterin guanine dinucleotide)</name>
        <dbReference type="ChEBI" id="CHEBI:60539"/>
    </ligand>
</feature>
<feature type="binding site" evidence="1">
    <location>
        <position position="531"/>
    </location>
    <ligand>
        <name>Mo-bis(molybdopterin guanine dinucleotide)</name>
        <dbReference type="ChEBI" id="CHEBI:60539"/>
    </ligand>
</feature>
<feature type="binding site" evidence="1">
    <location>
        <position position="558"/>
    </location>
    <ligand>
        <name>Mo-bis(molybdopterin guanine dinucleotide)</name>
        <dbReference type="ChEBI" id="CHEBI:60539"/>
    </ligand>
</feature>
<feature type="binding site" evidence="1">
    <location>
        <begin position="717"/>
        <end position="726"/>
    </location>
    <ligand>
        <name>Mo-bis(molybdopterin guanine dinucleotide)</name>
        <dbReference type="ChEBI" id="CHEBI:60539"/>
    </ligand>
</feature>
<feature type="binding site" evidence="1">
    <location>
        <position position="793"/>
    </location>
    <ligand>
        <name>substrate</name>
    </ligand>
</feature>
<feature type="binding site" evidence="1">
    <location>
        <position position="801"/>
    </location>
    <ligand>
        <name>Mo-bis(molybdopterin guanine dinucleotide)</name>
        <dbReference type="ChEBI" id="CHEBI:60539"/>
    </ligand>
</feature>
<feature type="binding site" evidence="1">
    <location>
        <position position="818"/>
    </location>
    <ligand>
        <name>Mo-bis(molybdopterin guanine dinucleotide)</name>
        <dbReference type="ChEBI" id="CHEBI:60539"/>
    </ligand>
</feature>
<proteinExistence type="inferred from homology"/>